<feature type="chain" id="PRO_0000117746" description="NADH-ubiquinone oxidoreductase chain 3">
    <location>
        <begin position="1"/>
        <end position="115"/>
    </location>
</feature>
<feature type="transmembrane region" description="Helical" evidence="3">
    <location>
        <begin position="3"/>
        <end position="23"/>
    </location>
</feature>
<feature type="transmembrane region" description="Helical" evidence="3">
    <location>
        <begin position="55"/>
        <end position="75"/>
    </location>
</feature>
<feature type="transmembrane region" description="Helical" evidence="3">
    <location>
        <begin position="84"/>
        <end position="104"/>
    </location>
</feature>
<gene>
    <name evidence="1" type="primary">MT-ND3</name>
    <name type="synonym">MTND3</name>
    <name type="synonym">NADH3</name>
    <name type="synonym">ND3</name>
</gene>
<proteinExistence type="inferred from homology"/>
<accession>Q9T9Y5</accession>
<geneLocation type="mitochondrion"/>
<dbReference type="EC" id="7.1.1.2" evidence="1"/>
<dbReference type="EMBL" id="D38114">
    <property type="protein sequence ID" value="BAA85282.1"/>
    <property type="molecule type" value="Genomic_DNA"/>
</dbReference>
<dbReference type="EMBL" id="X93347">
    <property type="status" value="NOT_ANNOTATED_CDS"/>
    <property type="molecule type" value="Genomic_DNA"/>
</dbReference>
<dbReference type="PIR" id="H59153">
    <property type="entry name" value="H59153"/>
</dbReference>
<dbReference type="PIR" id="S65745">
    <property type="entry name" value="S65745"/>
</dbReference>
<dbReference type="RefSeq" id="NP_008219.1">
    <property type="nucleotide sequence ID" value="NC_001645.1"/>
</dbReference>
<dbReference type="SMR" id="Q9T9Y5"/>
<dbReference type="FunCoup" id="Q9T9Y5">
    <property type="interactions" value="248"/>
</dbReference>
<dbReference type="STRING" id="9593.ENSGGOP00000021306"/>
<dbReference type="GeneID" id="807897"/>
<dbReference type="CTD" id="4537"/>
<dbReference type="eggNOG" id="KOG4662">
    <property type="taxonomic scope" value="Eukaryota"/>
</dbReference>
<dbReference type="InParanoid" id="Q9T9Y5"/>
<dbReference type="Proteomes" id="UP000001519">
    <property type="component" value="Mitochondrion"/>
</dbReference>
<dbReference type="GO" id="GO:0005743">
    <property type="term" value="C:mitochondrial inner membrane"/>
    <property type="evidence" value="ECO:0000250"/>
    <property type="project" value="UniProtKB"/>
</dbReference>
<dbReference type="GO" id="GO:0045271">
    <property type="term" value="C:respiratory chain complex I"/>
    <property type="evidence" value="ECO:0000318"/>
    <property type="project" value="GO_Central"/>
</dbReference>
<dbReference type="GO" id="GO:0008137">
    <property type="term" value="F:NADH dehydrogenase (ubiquinone) activity"/>
    <property type="evidence" value="ECO:0000250"/>
    <property type="project" value="UniProtKB"/>
</dbReference>
<dbReference type="GO" id="GO:0006120">
    <property type="term" value="P:mitochondrial electron transport, NADH to ubiquinone"/>
    <property type="evidence" value="ECO:0000250"/>
    <property type="project" value="UniProtKB"/>
</dbReference>
<dbReference type="FunFam" id="1.20.58.1610:FF:000004">
    <property type="entry name" value="NADH-quinone oxidoreductase subunit A"/>
    <property type="match status" value="1"/>
</dbReference>
<dbReference type="Gene3D" id="1.20.58.1610">
    <property type="entry name" value="NADH:ubiquinone/plastoquinone oxidoreductase, chain 3"/>
    <property type="match status" value="1"/>
</dbReference>
<dbReference type="InterPro" id="IPR000440">
    <property type="entry name" value="NADH_UbQ/plastoQ_OxRdtase_su3"/>
</dbReference>
<dbReference type="InterPro" id="IPR038430">
    <property type="entry name" value="NDAH_ubi_oxred_su3_sf"/>
</dbReference>
<dbReference type="PANTHER" id="PTHR11058">
    <property type="entry name" value="NADH-UBIQUINONE OXIDOREDUCTASE CHAIN 3"/>
    <property type="match status" value="1"/>
</dbReference>
<dbReference type="PANTHER" id="PTHR11058:SF9">
    <property type="entry name" value="NADH-UBIQUINONE OXIDOREDUCTASE CHAIN 3"/>
    <property type="match status" value="1"/>
</dbReference>
<dbReference type="Pfam" id="PF00507">
    <property type="entry name" value="Oxidored_q4"/>
    <property type="match status" value="1"/>
</dbReference>
<organism>
    <name type="scientific">Gorilla gorilla gorilla</name>
    <name type="common">Western lowland gorilla</name>
    <dbReference type="NCBI Taxonomy" id="9595"/>
    <lineage>
        <taxon>Eukaryota</taxon>
        <taxon>Metazoa</taxon>
        <taxon>Chordata</taxon>
        <taxon>Craniata</taxon>
        <taxon>Vertebrata</taxon>
        <taxon>Euteleostomi</taxon>
        <taxon>Mammalia</taxon>
        <taxon>Eutheria</taxon>
        <taxon>Euarchontoglires</taxon>
        <taxon>Primates</taxon>
        <taxon>Haplorrhini</taxon>
        <taxon>Catarrhini</taxon>
        <taxon>Hominidae</taxon>
        <taxon>Gorilla</taxon>
    </lineage>
</organism>
<sequence>MNFALILMTNTLLALLLMIITFWLPQLNSYMEKTNPYECGFDPVSPARIPFSMKFFLVAITFLLFDLEIALLLPLPWALQTTNLPLMVMSSLLLIIILTLSLAYEWLQKGLDWTE</sequence>
<evidence type="ECO:0000250" key="1">
    <source>
        <dbReference type="UniProtKB" id="P03897"/>
    </source>
</evidence>
<evidence type="ECO:0000250" key="2">
    <source>
        <dbReference type="UniProtKB" id="P03898"/>
    </source>
</evidence>
<evidence type="ECO:0000255" key="3"/>
<evidence type="ECO:0000305" key="4"/>
<protein>
    <recommendedName>
        <fullName evidence="1">NADH-ubiquinone oxidoreductase chain 3</fullName>
        <ecNumber evidence="1">7.1.1.2</ecNumber>
    </recommendedName>
    <alternativeName>
        <fullName>NADH dehydrogenase subunit 3</fullName>
    </alternativeName>
</protein>
<keyword id="KW-0249">Electron transport</keyword>
<keyword id="KW-0472">Membrane</keyword>
<keyword id="KW-0496">Mitochondrion</keyword>
<keyword id="KW-0999">Mitochondrion inner membrane</keyword>
<keyword id="KW-0520">NAD</keyword>
<keyword id="KW-1185">Reference proteome</keyword>
<keyword id="KW-0679">Respiratory chain</keyword>
<keyword id="KW-1278">Translocase</keyword>
<keyword id="KW-0812">Transmembrane</keyword>
<keyword id="KW-1133">Transmembrane helix</keyword>
<keyword id="KW-0813">Transport</keyword>
<keyword id="KW-0830">Ubiquinone</keyword>
<name>NU3M_GORGO</name>
<reference key="1">
    <citation type="journal article" date="1995" name="Proc. Natl. Acad. Sci. U.S.A.">
        <title>Recent African origin of modern humans revealed by complete sequences of hominoid mitochondrial DNAs.</title>
        <authorList>
            <person name="Horai S."/>
            <person name="Hayasaka K."/>
            <person name="Kondo R."/>
            <person name="Tsugane K."/>
            <person name="Takahata N."/>
        </authorList>
    </citation>
    <scope>NUCLEOTIDE SEQUENCE [GENOMIC DNA]</scope>
</reference>
<reference key="2">
    <citation type="journal article" date="1996" name="Mol. Biol. Evol.">
        <title>A complete sequence of the mitochondrial genome of the western lowland gorilla.</title>
        <authorList>
            <person name="Xu X."/>
            <person name="Arnason U."/>
        </authorList>
    </citation>
    <scope>NUCLEOTIDE SEQUENCE [GENOMIC DNA]</scope>
</reference>
<comment type="function">
    <text evidence="1">Core subunit of the mitochondrial membrane respiratory chain NADH dehydrogenase (Complex I) which catalyzes electron transfer from NADH through the respiratory chain, using ubiquinone as an electron acceptor. Essential for the catalytic activity of complex I.</text>
</comment>
<comment type="catalytic activity">
    <reaction evidence="1">
        <text>a ubiquinone + NADH + 5 H(+)(in) = a ubiquinol + NAD(+) + 4 H(+)(out)</text>
        <dbReference type="Rhea" id="RHEA:29091"/>
        <dbReference type="Rhea" id="RHEA-COMP:9565"/>
        <dbReference type="Rhea" id="RHEA-COMP:9566"/>
        <dbReference type="ChEBI" id="CHEBI:15378"/>
        <dbReference type="ChEBI" id="CHEBI:16389"/>
        <dbReference type="ChEBI" id="CHEBI:17976"/>
        <dbReference type="ChEBI" id="CHEBI:57540"/>
        <dbReference type="ChEBI" id="CHEBI:57945"/>
        <dbReference type="EC" id="7.1.1.2"/>
    </reaction>
</comment>
<comment type="subunit">
    <text evidence="1">Core subunit of respiratory chain NADH dehydrogenase (Complex I) which is composed of 45 different subunits. Interacts with TMEM186. Interacts with TMEM242 (By similarity).</text>
</comment>
<comment type="subcellular location">
    <subcellularLocation>
        <location evidence="2">Mitochondrion inner membrane</location>
        <topology evidence="3">Multi-pass membrane protein</topology>
    </subcellularLocation>
</comment>
<comment type="similarity">
    <text evidence="4">Belongs to the complex I subunit 3 family.</text>
</comment>